<sequence>MAAAAELSLLEKSLGLSKGNKYSAQGERQIPVLQTNNGPSLTGLTTIAAHLVKQANKEYLLGSTAEEKAIVQQWLEYRVTQVDGHSSKNDIHTLLKDLNSYLEDKVYLTGYNFTLADILLYYGLHRFIVDLTVQEKEKYLNVSRWFCHIQHYPGIRQHLSSVVFIKNRLYTNSH</sequence>
<name>MCA3_HUMAN</name>
<organism>
    <name type="scientific">Homo sapiens</name>
    <name type="common">Human</name>
    <dbReference type="NCBI Taxonomy" id="9606"/>
    <lineage>
        <taxon>Eukaryota</taxon>
        <taxon>Metazoa</taxon>
        <taxon>Chordata</taxon>
        <taxon>Craniata</taxon>
        <taxon>Vertebrata</taxon>
        <taxon>Euteleostomi</taxon>
        <taxon>Mammalia</taxon>
        <taxon>Eutheria</taxon>
        <taxon>Euarchontoglires</taxon>
        <taxon>Primates</taxon>
        <taxon>Haplorrhini</taxon>
        <taxon>Catarrhini</taxon>
        <taxon>Hominidae</taxon>
        <taxon>Homo</taxon>
    </lineage>
</organism>
<gene>
    <name type="primary">EEF1E1</name>
    <name type="synonym">AIMP3</name>
    <name evidence="9" type="synonym">P18</name>
</gene>
<reference key="1">
    <citation type="submission" date="1998-02" db="EMBL/GenBank/DDBJ databases">
        <title>Cloning of cDNA for human p18 from human testis.</title>
        <authorList>
            <person name="Motegi H."/>
            <person name="Noda T."/>
            <person name="Shiba K."/>
        </authorList>
    </citation>
    <scope>NUCLEOTIDE SEQUENCE [MRNA] (ISOFORM 1)</scope>
    <source>
        <tissue>Testis</tissue>
    </source>
</reference>
<reference key="2">
    <citation type="journal article" date="1998" name="Proc. Natl. Acad. Sci. U.S.A.">
        <title>Identification of genes expressed in human CD34(+) hematopoietic stem/progenitor cells by expressed sequence tags and efficient full-length cDNA cloning.</title>
        <authorList>
            <person name="Mao M."/>
            <person name="Fu G."/>
            <person name="Wu J.-S."/>
            <person name="Zhang Q.-H."/>
            <person name="Zhou J."/>
            <person name="Kan L.-X."/>
            <person name="Huang Q.-H."/>
            <person name="He K.-L."/>
            <person name="Gu B.-W."/>
            <person name="Han Z.-G."/>
            <person name="Shen Y."/>
            <person name="Gu J."/>
            <person name="Yu Y.-P."/>
            <person name="Xu S.-H."/>
            <person name="Wang Y.-X."/>
            <person name="Chen S.-J."/>
            <person name="Chen Z."/>
        </authorList>
    </citation>
    <scope>NUCLEOTIDE SEQUENCE [LARGE SCALE MRNA] (ISOFORM 1)</scope>
    <source>
        <tissue>Umbilical cord blood</tissue>
    </source>
</reference>
<reference key="3">
    <citation type="submission" date="2003-05" db="EMBL/GenBank/DDBJ databases">
        <title>Cloning of human full-length CDSs in BD Creator(TM) system donor vector.</title>
        <authorList>
            <person name="Kalnine N."/>
            <person name="Chen X."/>
            <person name="Rolfs A."/>
            <person name="Halleck A."/>
            <person name="Hines L."/>
            <person name="Eisenstein S."/>
            <person name="Koundinya M."/>
            <person name="Raphael J."/>
            <person name="Moreira D."/>
            <person name="Kelley T."/>
            <person name="LaBaer J."/>
            <person name="Lin Y."/>
            <person name="Phelan M."/>
            <person name="Farmer A."/>
        </authorList>
    </citation>
    <scope>NUCLEOTIDE SEQUENCE [LARGE SCALE MRNA] (ISOFORM 1)</scope>
</reference>
<reference key="4">
    <citation type="journal article" date="2003" name="Nature">
        <title>The DNA sequence and analysis of human chromosome 6.</title>
        <authorList>
            <person name="Mungall A.J."/>
            <person name="Palmer S.A."/>
            <person name="Sims S.K."/>
            <person name="Edwards C.A."/>
            <person name="Ashurst J.L."/>
            <person name="Wilming L."/>
            <person name="Jones M.C."/>
            <person name="Horton R."/>
            <person name="Hunt S.E."/>
            <person name="Scott C.E."/>
            <person name="Gilbert J.G.R."/>
            <person name="Clamp M.E."/>
            <person name="Bethel G."/>
            <person name="Milne S."/>
            <person name="Ainscough R."/>
            <person name="Almeida J.P."/>
            <person name="Ambrose K.D."/>
            <person name="Andrews T.D."/>
            <person name="Ashwell R.I.S."/>
            <person name="Babbage A.K."/>
            <person name="Bagguley C.L."/>
            <person name="Bailey J."/>
            <person name="Banerjee R."/>
            <person name="Barker D.J."/>
            <person name="Barlow K.F."/>
            <person name="Bates K."/>
            <person name="Beare D.M."/>
            <person name="Beasley H."/>
            <person name="Beasley O."/>
            <person name="Bird C.P."/>
            <person name="Blakey S.E."/>
            <person name="Bray-Allen S."/>
            <person name="Brook J."/>
            <person name="Brown A.J."/>
            <person name="Brown J.Y."/>
            <person name="Burford D.C."/>
            <person name="Burrill W."/>
            <person name="Burton J."/>
            <person name="Carder C."/>
            <person name="Carter N.P."/>
            <person name="Chapman J.C."/>
            <person name="Clark S.Y."/>
            <person name="Clark G."/>
            <person name="Clee C.M."/>
            <person name="Clegg S."/>
            <person name="Cobley V."/>
            <person name="Collier R.E."/>
            <person name="Collins J.E."/>
            <person name="Colman L.K."/>
            <person name="Corby N.R."/>
            <person name="Coville G.J."/>
            <person name="Culley K.M."/>
            <person name="Dhami P."/>
            <person name="Davies J."/>
            <person name="Dunn M."/>
            <person name="Earthrowl M.E."/>
            <person name="Ellington A.E."/>
            <person name="Evans K.A."/>
            <person name="Faulkner L."/>
            <person name="Francis M.D."/>
            <person name="Frankish A."/>
            <person name="Frankland J."/>
            <person name="French L."/>
            <person name="Garner P."/>
            <person name="Garnett J."/>
            <person name="Ghori M.J."/>
            <person name="Gilby L.M."/>
            <person name="Gillson C.J."/>
            <person name="Glithero R.J."/>
            <person name="Grafham D.V."/>
            <person name="Grant M."/>
            <person name="Gribble S."/>
            <person name="Griffiths C."/>
            <person name="Griffiths M.N.D."/>
            <person name="Hall R."/>
            <person name="Halls K.S."/>
            <person name="Hammond S."/>
            <person name="Harley J.L."/>
            <person name="Hart E.A."/>
            <person name="Heath P.D."/>
            <person name="Heathcott R."/>
            <person name="Holmes S.J."/>
            <person name="Howden P.J."/>
            <person name="Howe K.L."/>
            <person name="Howell G.R."/>
            <person name="Huckle E."/>
            <person name="Humphray S.J."/>
            <person name="Humphries M.D."/>
            <person name="Hunt A.R."/>
            <person name="Johnson C.M."/>
            <person name="Joy A.A."/>
            <person name="Kay M."/>
            <person name="Keenan S.J."/>
            <person name="Kimberley A.M."/>
            <person name="King A."/>
            <person name="Laird G.K."/>
            <person name="Langford C."/>
            <person name="Lawlor S."/>
            <person name="Leongamornlert D.A."/>
            <person name="Leversha M."/>
            <person name="Lloyd C.R."/>
            <person name="Lloyd D.M."/>
            <person name="Loveland J.E."/>
            <person name="Lovell J."/>
            <person name="Martin S."/>
            <person name="Mashreghi-Mohammadi M."/>
            <person name="Maslen G.L."/>
            <person name="Matthews L."/>
            <person name="McCann O.T."/>
            <person name="McLaren S.J."/>
            <person name="McLay K."/>
            <person name="McMurray A."/>
            <person name="Moore M.J.F."/>
            <person name="Mullikin J.C."/>
            <person name="Niblett D."/>
            <person name="Nickerson T."/>
            <person name="Novik K.L."/>
            <person name="Oliver K."/>
            <person name="Overton-Larty E.K."/>
            <person name="Parker A."/>
            <person name="Patel R."/>
            <person name="Pearce A.V."/>
            <person name="Peck A.I."/>
            <person name="Phillimore B.J.C.T."/>
            <person name="Phillips S."/>
            <person name="Plumb R.W."/>
            <person name="Porter K.M."/>
            <person name="Ramsey Y."/>
            <person name="Ranby S.A."/>
            <person name="Rice C.M."/>
            <person name="Ross M.T."/>
            <person name="Searle S.M."/>
            <person name="Sehra H.K."/>
            <person name="Sheridan E."/>
            <person name="Skuce C.D."/>
            <person name="Smith S."/>
            <person name="Smith M."/>
            <person name="Spraggon L."/>
            <person name="Squares S.L."/>
            <person name="Steward C.A."/>
            <person name="Sycamore N."/>
            <person name="Tamlyn-Hall G."/>
            <person name="Tester J."/>
            <person name="Theaker A.J."/>
            <person name="Thomas D.W."/>
            <person name="Thorpe A."/>
            <person name="Tracey A."/>
            <person name="Tromans A."/>
            <person name="Tubby B."/>
            <person name="Wall M."/>
            <person name="Wallis J.M."/>
            <person name="West A.P."/>
            <person name="White S.S."/>
            <person name="Whitehead S.L."/>
            <person name="Whittaker H."/>
            <person name="Wild A."/>
            <person name="Willey D.J."/>
            <person name="Wilmer T.E."/>
            <person name="Wood J.M."/>
            <person name="Wray P.W."/>
            <person name="Wyatt J.C."/>
            <person name="Young L."/>
            <person name="Younger R.M."/>
            <person name="Bentley D.R."/>
            <person name="Coulson A."/>
            <person name="Durbin R.M."/>
            <person name="Hubbard T."/>
            <person name="Sulston J.E."/>
            <person name="Dunham I."/>
            <person name="Rogers J."/>
            <person name="Beck S."/>
        </authorList>
    </citation>
    <scope>NUCLEOTIDE SEQUENCE [LARGE SCALE GENOMIC DNA]</scope>
</reference>
<reference key="5">
    <citation type="journal article" date="2004" name="Genome Res.">
        <title>The status, quality, and expansion of the NIH full-length cDNA project: the Mammalian Gene Collection (MGC).</title>
        <authorList>
            <consortium name="The MGC Project Team"/>
        </authorList>
    </citation>
    <scope>NUCLEOTIDE SEQUENCE [LARGE SCALE MRNA] (ISOFORMS 1 AND 2)</scope>
    <source>
        <tissue>Brain cortex</tissue>
        <tissue>Urinary bladder</tissue>
    </source>
</reference>
<reference key="6">
    <citation type="submission" date="2008-12" db="UniProtKB">
        <authorList>
            <person name="Bienvenut W.V."/>
            <person name="Calvo F."/>
            <person name="Lilla S."/>
            <person name="von Kriegsheim A."/>
            <person name="Lempens A."/>
            <person name="Kolch W."/>
        </authorList>
    </citation>
    <scope>PROTEIN SEQUENCE OF 2-12 AND 79-88</scope>
    <scope>CLEAVAGE OF INITIATOR METHIONINE</scope>
    <scope>ACETYLATION AT ALA-2</scope>
    <scope>IDENTIFICATION BY MASS SPECTROMETRY</scope>
    <source>
        <tissue>Cervix carcinoma</tissue>
        <tissue>Ovarian carcinoma</tissue>
    </source>
</reference>
<reference key="7">
    <citation type="journal article" date="2005" name="Cell">
        <title>The haploinsufficient tumor suppressor p18 upregulates p53 via interactions with ATM/ATR.</title>
        <authorList>
            <person name="Park B.-J."/>
            <person name="Kang J.W."/>
            <person name="Lee S.W."/>
            <person name="Choi S.-J."/>
            <person name="Shin Y.K."/>
            <person name="Ahn Y.H."/>
            <person name="Choi Y.H."/>
            <person name="Choi D."/>
            <person name="Lee K.S."/>
            <person name="Kim S."/>
        </authorList>
    </citation>
    <scope>INTERACTION WITH ATM</scope>
    <scope>SUBCELLULAR LOCATION</scope>
    <scope>TISSUE SPECIFICITY</scope>
</reference>
<reference key="8">
    <citation type="journal article" date="2009" name="J. Biol. Chem.">
        <title>Dissection of the structural organization of the aminoacyl-tRNA synthetase complex.</title>
        <authorList>
            <person name="Kaminska M."/>
            <person name="Havrylenko S."/>
            <person name="Decottignies P."/>
            <person name="Gillet S."/>
            <person name="Le Marechal P."/>
            <person name="Negrutskii B."/>
            <person name="Mirande M."/>
        </authorList>
    </citation>
    <scope>SUBUNIT</scope>
    <scope>IDENTIFICATION BY MASS SPECTROMETRY</scope>
</reference>
<reference key="9">
    <citation type="journal article" date="2009" name="J. Biol. Chem.">
        <title>Dynamic Organization of Aminoacyl-tRNA Synthetase Complexes in the Cytoplasm of Human Cells.</title>
        <authorList>
            <person name="Kaminska M."/>
            <person name="Havrylenko S."/>
            <person name="Decottignies P."/>
            <person name="Le Marechal P."/>
            <person name="Negrutskii B."/>
            <person name="Mirande M."/>
        </authorList>
    </citation>
    <scope>SUBCELLULAR LOCATION</scope>
    <scope>SUBUNIT</scope>
</reference>
<reference key="10">
    <citation type="journal article" date="2009" name="Science">
        <title>Lysine acetylation targets protein complexes and co-regulates major cellular functions.</title>
        <authorList>
            <person name="Choudhary C."/>
            <person name="Kumar C."/>
            <person name="Gnad F."/>
            <person name="Nielsen M.L."/>
            <person name="Rehman M."/>
            <person name="Walther T.C."/>
            <person name="Olsen J.V."/>
            <person name="Mann M."/>
        </authorList>
    </citation>
    <scope>ACETYLATION [LARGE SCALE ANALYSIS] AT LYS-138</scope>
    <scope>IDENTIFICATION BY MASS SPECTROMETRY [LARGE SCALE ANALYSIS]</scope>
</reference>
<reference key="11">
    <citation type="journal article" date="2011" name="BMC Syst. Biol.">
        <title>Initial characterization of the human central proteome.</title>
        <authorList>
            <person name="Burkard T.R."/>
            <person name="Planyavsky M."/>
            <person name="Kaupe I."/>
            <person name="Breitwieser F.P."/>
            <person name="Buerckstuemmer T."/>
            <person name="Bennett K.L."/>
            <person name="Superti-Furga G."/>
            <person name="Colinge J."/>
        </authorList>
    </citation>
    <scope>IDENTIFICATION BY MASS SPECTROMETRY [LARGE SCALE ANALYSIS]</scope>
</reference>
<reference key="12">
    <citation type="journal article" date="2008" name="J. Biol. Chem.">
        <title>Determination of three-dimensional structure and residues of the novel tumor suppressor AIMP3/p18 required for the interaction with ATM.</title>
        <authorList>
            <person name="Kim K.J."/>
            <person name="Park M.C."/>
            <person name="Choi S.J."/>
            <person name="Oh Y.S."/>
            <person name="Choi E.C."/>
            <person name="Cho H.J."/>
            <person name="Kim M.H."/>
            <person name="Kim S.H."/>
            <person name="Kim D.W."/>
            <person name="Kim S."/>
            <person name="Kang B.S."/>
        </authorList>
    </citation>
    <scope>X-RAY CRYSTALLOGRAPHY (2.0 ANGSTROMS)</scope>
    <scope>DOMAIN ARCHITECTURE</scope>
    <scope>COILED-COIL DOMAIN</scope>
</reference>
<reference evidence="11 12" key="13">
    <citation type="journal article" date="2015" name="J. Biol. Chem.">
        <title>Assembly of Multi-tRNA Synthetase Complex via Heterotetrameric Glutathione Transferase-homology Domains.</title>
        <authorList>
            <person name="Cho H.Y."/>
            <person name="Maeng S.J."/>
            <person name="Cho H.J."/>
            <person name="Choi Y.S."/>
            <person name="Chung J.M."/>
            <person name="Lee S."/>
            <person name="Kim H.K."/>
            <person name="Kim J.H."/>
            <person name="Eom C.Y."/>
            <person name="Kim Y.G."/>
            <person name="Guo M."/>
            <person name="Jung H.S."/>
            <person name="Kang B.S."/>
            <person name="Kim S."/>
        </authorList>
    </citation>
    <scope>X-RAY CRYSTALLOGRAPHY (1.60 ANGSTROMS) OF 1-169 IN COMPLEX WITH MARS1</scope>
    <scope>SUBUNIT</scope>
    <scope>INTERACTION WITH MARS1 AND EPRS1</scope>
    <scope>MUTAGENESIS OF ALA-69; GLN-73 AND ARG-144</scope>
</reference>
<comment type="function">
    <text evidence="1">Positive modulator of ATM response to DNA damage.</text>
</comment>
<comment type="subunit">
    <text evidence="2 4 5 6">Part of a multisubunit complex that groups tRNA ligases for Arg (RARS1), Asp (DARS1), Gln (QARS1), Ile (IARS1), Leu (LARS1), Lys (KARS1), Met (MARS1) the bifunctional ligase for Glu and Pro (EPRS1) and the auxiliary subunits AIMP1/p43, AIMP2/p38 and EEF1E1/p18 (PubMed:19131329, PubMed:19289464). Can interact simultaneously with MARS1 and EPRS1 (PubMed:26472928). Forms a linear complex that contains MARS1, EEF1E1, EPRS1 and AIMP2 that is at the core of the multisubunit complex (PubMed:26472928). Interacts with ATM and ATR. The interaction with ATM, which takes place independently of TP53, is induced by DNA damage that may occur during genotoxic stress or cell growth. The interaction with ATR is enhanced by UV irradiation.</text>
</comment>
<comment type="interaction">
    <interactant intactId="EBI-1048486">
        <id>O43324</id>
    </interactant>
    <interactant intactId="EBI-739580">
        <id>Q13137</id>
        <label>CALCOCO2</label>
    </interactant>
    <organismsDiffer>false</organismsDiffer>
    <experiments>3</experiments>
</comment>
<comment type="interaction">
    <interactant intactId="EBI-1048486">
        <id>O43324</id>
    </interactant>
    <interactant intactId="EBI-711919">
        <id>Q9BTE0</id>
        <label>NAT9</label>
    </interactant>
    <organismsDiffer>false</organismsDiffer>
    <experiments>4</experiments>
</comment>
<comment type="interaction">
    <interactant intactId="EBI-1048486">
        <id>O43324</id>
    </interactant>
    <interactant intactId="EBI-6179719">
        <id>PRO_0000038593</id>
        <label>gag</label>
        <dbReference type="UniProtKB" id="P04591"/>
    </interactant>
    <organismsDiffer>true</organismsDiffer>
    <experiments>4</experiments>
</comment>
<comment type="subcellular location">
    <subcellularLocation>
        <location evidence="2">Cytoplasm</location>
    </subcellularLocation>
    <subcellularLocation>
        <location evidence="5">Cytoplasm</location>
        <location evidence="5">Cytosol</location>
    </subcellularLocation>
    <subcellularLocation>
        <location evidence="2">Nucleus</location>
    </subcellularLocation>
    <text>Cytoplasmic under growth arrest conditions. Translocated into the nucleus when growth resumes (S phase) and following DNA damage.</text>
</comment>
<comment type="alternative products">
    <event type="alternative splicing"/>
    <isoform>
        <id>O43324-1</id>
        <name>1</name>
        <sequence type="displayed"/>
    </isoform>
    <isoform>
        <id>O43324-2</id>
        <name>2</name>
        <sequence type="described" ref="VSP_045088"/>
    </isoform>
</comment>
<comment type="tissue specificity">
    <text evidence="2">Down-regulated in various cancer tissues.</text>
</comment>
<comment type="induction">
    <text>By DNA damaging agents such as UV, adriamycin, actinomycin-D and cisplatin.</text>
</comment>
<feature type="initiator methionine" description="Removed" evidence="7">
    <location>
        <position position="1"/>
    </location>
</feature>
<feature type="chain" id="PRO_0000221132" description="Eukaryotic translation elongation factor 1 epsilon-1">
    <location>
        <begin position="2"/>
        <end position="174"/>
    </location>
</feature>
<feature type="domain" description="GST C-terminal">
    <location>
        <begin position="50"/>
        <end position="173"/>
    </location>
</feature>
<feature type="region of interest" description="N-terminal">
    <location>
        <begin position="2"/>
        <end position="56"/>
    </location>
</feature>
<feature type="region of interest" description="Linker">
    <location>
        <begin position="57"/>
        <end position="63"/>
    </location>
</feature>
<feature type="region of interest" description="C-terminal">
    <location>
        <begin position="64"/>
        <end position="152"/>
    </location>
</feature>
<feature type="coiled-coil region" evidence="3">
    <location>
        <begin position="153"/>
        <end position="169"/>
    </location>
</feature>
<feature type="modified residue" description="N-acetylalanine" evidence="7">
    <location>
        <position position="2"/>
    </location>
</feature>
<feature type="modified residue" description="N6-acetyllysine" evidence="13">
    <location>
        <position position="138"/>
    </location>
</feature>
<feature type="splice variant" id="VSP_045088" description="In isoform 2." evidence="8">
    <original>VDLTVQEKEKYLNVSRWFCHIQHYPGIRQHLSSVVFIKNRLYTNSH</original>
    <variation>IRKLRHTEVGN</variation>
    <location>
        <begin position="129"/>
        <end position="174"/>
    </location>
</feature>
<feature type="mutagenesis site" description="Disrupts interaction with MARS1." evidence="6">
    <original>A</original>
    <variation>R</variation>
    <location>
        <position position="69"/>
    </location>
</feature>
<feature type="mutagenesis site" description="Disrupts interaction with MARS1." evidence="6">
    <original>Q</original>
    <variation>R</variation>
    <location>
        <position position="73"/>
    </location>
</feature>
<feature type="mutagenesis site" description="Disrupts interaction with EPRS1." evidence="6">
    <original>R</original>
    <variation>A</variation>
    <location>
        <position position="144"/>
    </location>
</feature>
<feature type="helix" evidence="14">
    <location>
        <begin position="3"/>
        <end position="14"/>
    </location>
</feature>
<feature type="strand" evidence="14">
    <location>
        <begin position="22"/>
        <end position="25"/>
    </location>
</feature>
<feature type="turn" evidence="14">
    <location>
        <begin position="26"/>
        <end position="29"/>
    </location>
</feature>
<feature type="strand" evidence="14">
    <location>
        <begin position="30"/>
        <end position="34"/>
    </location>
</feature>
<feature type="strand" evidence="16">
    <location>
        <begin position="36"/>
        <end position="39"/>
    </location>
</feature>
<feature type="strand" evidence="14">
    <location>
        <begin position="40"/>
        <end position="43"/>
    </location>
</feature>
<feature type="helix" evidence="14">
    <location>
        <begin position="44"/>
        <end position="54"/>
    </location>
</feature>
<feature type="helix" evidence="14">
    <location>
        <begin position="58"/>
        <end position="61"/>
    </location>
</feature>
<feature type="helix" evidence="14">
    <location>
        <begin position="65"/>
        <end position="80"/>
    </location>
</feature>
<feature type="turn" evidence="15">
    <location>
        <begin position="81"/>
        <end position="84"/>
    </location>
</feature>
<feature type="helix" evidence="14">
    <location>
        <begin position="85"/>
        <end position="101"/>
    </location>
</feature>
<feature type="helix" evidence="14">
    <location>
        <begin position="102"/>
        <end position="104"/>
    </location>
</feature>
<feature type="strand" evidence="14">
    <location>
        <begin position="110"/>
        <end position="112"/>
    </location>
</feature>
<feature type="helix" evidence="14">
    <location>
        <begin position="115"/>
        <end position="128"/>
    </location>
</feature>
<feature type="helix" evidence="14">
    <location>
        <begin position="133"/>
        <end position="138"/>
    </location>
</feature>
<feature type="helix" evidence="14">
    <location>
        <begin position="140"/>
        <end position="151"/>
    </location>
</feature>
<feature type="turn" evidence="14">
    <location>
        <begin position="153"/>
        <end position="155"/>
    </location>
</feature>
<proteinExistence type="evidence at protein level"/>
<keyword id="KW-0002">3D-structure</keyword>
<keyword id="KW-0007">Acetylation</keyword>
<keyword id="KW-0025">Alternative splicing</keyword>
<keyword id="KW-0175">Coiled coil</keyword>
<keyword id="KW-0963">Cytoplasm</keyword>
<keyword id="KW-0903">Direct protein sequencing</keyword>
<keyword id="KW-0539">Nucleus</keyword>
<keyword id="KW-0648">Protein biosynthesis</keyword>
<keyword id="KW-1267">Proteomics identification</keyword>
<keyword id="KW-1185">Reference proteome</keyword>
<accession>O43324</accession>
<accession>C9JLK5</accession>
<accession>Q5THS2</accession>
<evidence type="ECO:0000250" key="1">
    <source>
        <dbReference type="UniProtKB" id="Q9D1M4"/>
    </source>
</evidence>
<evidence type="ECO:0000269" key="2">
    <source>
    </source>
</evidence>
<evidence type="ECO:0000269" key="3">
    <source>
    </source>
</evidence>
<evidence type="ECO:0000269" key="4">
    <source>
    </source>
</evidence>
<evidence type="ECO:0000269" key="5">
    <source>
    </source>
</evidence>
<evidence type="ECO:0000269" key="6">
    <source>
    </source>
</evidence>
<evidence type="ECO:0000269" key="7">
    <source ref="6"/>
</evidence>
<evidence type="ECO:0000303" key="8">
    <source>
    </source>
</evidence>
<evidence type="ECO:0000303" key="9">
    <source>
    </source>
</evidence>
<evidence type="ECO:0000303" key="10">
    <source>
    </source>
</evidence>
<evidence type="ECO:0007744" key="11">
    <source>
        <dbReference type="PDB" id="4BVX"/>
    </source>
</evidence>
<evidence type="ECO:0007744" key="12">
    <source>
        <dbReference type="PDB" id="5BMU"/>
    </source>
</evidence>
<evidence type="ECO:0007744" key="13">
    <source>
    </source>
</evidence>
<evidence type="ECO:0007829" key="14">
    <source>
        <dbReference type="PDB" id="4BVX"/>
    </source>
</evidence>
<evidence type="ECO:0007829" key="15">
    <source>
        <dbReference type="PDB" id="4BVY"/>
    </source>
</evidence>
<evidence type="ECO:0007829" key="16">
    <source>
        <dbReference type="PDB" id="5BMU"/>
    </source>
</evidence>
<protein>
    <recommendedName>
        <fullName>Eukaryotic translation elongation factor 1 epsilon-1</fullName>
    </recommendedName>
    <alternativeName>
        <fullName>Aminoacyl tRNA synthetase complex-interacting multifunctional protein 3</fullName>
    </alternativeName>
    <alternativeName>
        <fullName>Elongation factor p18</fullName>
    </alternativeName>
    <alternativeName>
        <fullName evidence="10">Multisynthase complex auxiliary component p18</fullName>
    </alternativeName>
</protein>
<dbReference type="EMBL" id="AB011079">
    <property type="protein sequence ID" value="BAA24926.1"/>
    <property type="molecule type" value="mRNA"/>
</dbReference>
<dbReference type="EMBL" id="AF054186">
    <property type="protein sequence ID" value="AAC39916.1"/>
    <property type="molecule type" value="mRNA"/>
</dbReference>
<dbReference type="EMBL" id="BT007306">
    <property type="protein sequence ID" value="AAP35970.1"/>
    <property type="molecule type" value="mRNA"/>
</dbReference>
<dbReference type="EMBL" id="AL355499">
    <property type="status" value="NOT_ANNOTATED_CDS"/>
    <property type="molecule type" value="Genomic_DNA"/>
</dbReference>
<dbReference type="EMBL" id="AL023694">
    <property type="status" value="NOT_ANNOTATED_CDS"/>
    <property type="molecule type" value="Genomic_DNA"/>
</dbReference>
<dbReference type="EMBL" id="AL451187">
    <property type="status" value="NOT_ANNOTATED_CDS"/>
    <property type="molecule type" value="Genomic_DNA"/>
</dbReference>
<dbReference type="EMBL" id="BC005291">
    <property type="protein sequence ID" value="AAH05291.1"/>
    <property type="molecule type" value="mRNA"/>
</dbReference>
<dbReference type="EMBL" id="CK002875">
    <property type="status" value="NOT_ANNOTATED_CDS"/>
    <property type="molecule type" value="mRNA"/>
</dbReference>
<dbReference type="CCDS" id="CCDS4507.1">
    <molecule id="O43324-1"/>
</dbReference>
<dbReference type="CCDS" id="CCDS47370.1">
    <molecule id="O43324-2"/>
</dbReference>
<dbReference type="RefSeq" id="NP_001129122.1">
    <molecule id="O43324-2"/>
    <property type="nucleotide sequence ID" value="NM_001135650.2"/>
</dbReference>
<dbReference type="RefSeq" id="NP_004271.1">
    <molecule id="O43324-1"/>
    <property type="nucleotide sequence ID" value="NM_004280.5"/>
</dbReference>
<dbReference type="PDB" id="2UZ8">
    <property type="method" value="X-ray"/>
    <property type="resolution" value="2.00 A"/>
    <property type="chains" value="A/B=1-174"/>
</dbReference>
<dbReference type="PDB" id="4BL7">
    <property type="method" value="X-ray"/>
    <property type="resolution" value="1.89 A"/>
    <property type="chains" value="B=1-174"/>
</dbReference>
<dbReference type="PDB" id="4BVX">
    <property type="method" value="X-ray"/>
    <property type="resolution" value="1.60 A"/>
    <property type="chains" value="B=1-169"/>
</dbReference>
<dbReference type="PDB" id="4BVY">
    <property type="method" value="X-ray"/>
    <property type="resolution" value="1.99 A"/>
    <property type="chains" value="B=1-174"/>
</dbReference>
<dbReference type="PDB" id="5BMU">
    <property type="method" value="X-ray"/>
    <property type="resolution" value="2.60 A"/>
    <property type="chains" value="A/C/E/G=1-169"/>
</dbReference>
<dbReference type="PDB" id="5Y6L">
    <property type="method" value="X-ray"/>
    <property type="resolution" value="2.90 A"/>
    <property type="chains" value="B=1-174"/>
</dbReference>
<dbReference type="PDBsum" id="2UZ8"/>
<dbReference type="PDBsum" id="4BL7"/>
<dbReference type="PDBsum" id="4BVX"/>
<dbReference type="PDBsum" id="4BVY"/>
<dbReference type="PDBsum" id="5BMU"/>
<dbReference type="PDBsum" id="5Y6L"/>
<dbReference type="SMR" id="O43324"/>
<dbReference type="BioGRID" id="114898">
    <property type="interactions" value="138"/>
</dbReference>
<dbReference type="ComplexPortal" id="CPX-2469">
    <property type="entry name" value="Multiaminoacyl-tRNA synthetase complex"/>
</dbReference>
<dbReference type="CORUM" id="O43324"/>
<dbReference type="DIP" id="DIP-50581N"/>
<dbReference type="FunCoup" id="O43324">
    <property type="interactions" value="2803"/>
</dbReference>
<dbReference type="IntAct" id="O43324">
    <property type="interactions" value="53"/>
</dbReference>
<dbReference type="MINT" id="O43324"/>
<dbReference type="STRING" id="9606.ENSP00000369038"/>
<dbReference type="GlyGen" id="O43324">
    <property type="glycosylation" value="2 sites, 1 O-linked glycan (2 sites)"/>
</dbReference>
<dbReference type="iPTMnet" id="O43324"/>
<dbReference type="PhosphoSitePlus" id="O43324"/>
<dbReference type="SwissPalm" id="O43324"/>
<dbReference type="BioMuta" id="EEF1E1"/>
<dbReference type="jPOST" id="O43324"/>
<dbReference type="MassIVE" id="O43324"/>
<dbReference type="PaxDb" id="9606-ENSP00000369038"/>
<dbReference type="PeptideAtlas" id="O43324"/>
<dbReference type="ProteomicsDB" id="10721"/>
<dbReference type="ProteomicsDB" id="48904">
    <molecule id="O43324-1"/>
</dbReference>
<dbReference type="Pumba" id="O43324"/>
<dbReference type="TopDownProteomics" id="O43324-1">
    <molecule id="O43324-1"/>
</dbReference>
<dbReference type="TopDownProteomics" id="O43324-2">
    <molecule id="O43324-2"/>
</dbReference>
<dbReference type="Antibodypedia" id="24724">
    <property type="antibodies" value="197 antibodies from 30 providers"/>
</dbReference>
<dbReference type="DNASU" id="9521"/>
<dbReference type="Ensembl" id="ENST00000379715.10">
    <molecule id="O43324-1"/>
    <property type="protein sequence ID" value="ENSP00000369038.5"/>
    <property type="gene ID" value="ENSG00000124802.12"/>
</dbReference>
<dbReference type="Ensembl" id="ENST00000429723.6">
    <molecule id="O43324-2"/>
    <property type="protein sequence ID" value="ENSP00000414363.2"/>
    <property type="gene ID" value="ENSG00000124802.12"/>
</dbReference>
<dbReference type="GeneID" id="9521"/>
<dbReference type="KEGG" id="hsa:9521"/>
<dbReference type="MANE-Select" id="ENST00000379715.10">
    <property type="protein sequence ID" value="ENSP00000369038.5"/>
    <property type="RefSeq nucleotide sequence ID" value="NM_004280.5"/>
    <property type="RefSeq protein sequence ID" value="NP_004271.1"/>
</dbReference>
<dbReference type="UCSC" id="uc003mxz.4">
    <molecule id="O43324-1"/>
    <property type="organism name" value="human"/>
</dbReference>
<dbReference type="AGR" id="HGNC:3212"/>
<dbReference type="CTD" id="9521"/>
<dbReference type="DisGeNET" id="9521"/>
<dbReference type="GeneCards" id="EEF1E1"/>
<dbReference type="HGNC" id="HGNC:3212">
    <property type="gene designation" value="EEF1E1"/>
</dbReference>
<dbReference type="HPA" id="ENSG00000124802">
    <property type="expression patterns" value="Low tissue specificity"/>
</dbReference>
<dbReference type="MIM" id="609206">
    <property type="type" value="gene"/>
</dbReference>
<dbReference type="neXtProt" id="NX_O43324"/>
<dbReference type="OpenTargets" id="ENSG00000124802"/>
<dbReference type="PharmGKB" id="PA27648"/>
<dbReference type="VEuPathDB" id="HostDB:ENSG00000124802"/>
<dbReference type="eggNOG" id="KOG0867">
    <property type="taxonomic scope" value="Eukaryota"/>
</dbReference>
<dbReference type="GeneTree" id="ENSGT00390000003564"/>
<dbReference type="HOGENOM" id="CLU_098079_0_0_1"/>
<dbReference type="InParanoid" id="O43324"/>
<dbReference type="OMA" id="NWATGTH"/>
<dbReference type="OrthoDB" id="19141at2759"/>
<dbReference type="PAN-GO" id="O43324">
    <property type="GO annotations" value="3 GO annotations based on evolutionary models"/>
</dbReference>
<dbReference type="PhylomeDB" id="O43324"/>
<dbReference type="TreeFam" id="TF326005"/>
<dbReference type="PathwayCommons" id="O43324"/>
<dbReference type="Reactome" id="R-HSA-2408522">
    <property type="pathway name" value="Selenoamino acid metabolism"/>
</dbReference>
<dbReference type="Reactome" id="R-HSA-379716">
    <property type="pathway name" value="Cytosolic tRNA aminoacylation"/>
</dbReference>
<dbReference type="Reactome" id="R-HSA-9856649">
    <property type="pathway name" value="Transcriptional and post-translational regulation of MITF-M expression and activity"/>
</dbReference>
<dbReference type="SignaLink" id="O43324"/>
<dbReference type="SIGNOR" id="O43324"/>
<dbReference type="BioGRID-ORCS" id="9521">
    <property type="hits" value="74 hits in 1153 CRISPR screens"/>
</dbReference>
<dbReference type="CD-CODE" id="91857CE7">
    <property type="entry name" value="Nucleolus"/>
</dbReference>
<dbReference type="EvolutionaryTrace" id="O43324"/>
<dbReference type="GeneWiki" id="EEF1E1"/>
<dbReference type="GenomeRNAi" id="9521"/>
<dbReference type="Pharos" id="O43324">
    <property type="development level" value="Tbio"/>
</dbReference>
<dbReference type="PRO" id="PR:O43324"/>
<dbReference type="Proteomes" id="UP000005640">
    <property type="component" value="Chromosome 6"/>
</dbReference>
<dbReference type="RNAct" id="O43324">
    <property type="molecule type" value="protein"/>
</dbReference>
<dbReference type="Bgee" id="ENSG00000124802">
    <property type="expression patterns" value="Expressed in pons and 208 other cell types or tissues"/>
</dbReference>
<dbReference type="ExpressionAtlas" id="O43324">
    <property type="expression patterns" value="baseline and differential"/>
</dbReference>
<dbReference type="GO" id="GO:0017101">
    <property type="term" value="C:aminoacyl-tRNA synthetase multienzyme complex"/>
    <property type="evidence" value="ECO:0000314"/>
    <property type="project" value="UniProtKB"/>
</dbReference>
<dbReference type="GO" id="GO:0005737">
    <property type="term" value="C:cytoplasm"/>
    <property type="evidence" value="ECO:0000250"/>
    <property type="project" value="UniProtKB"/>
</dbReference>
<dbReference type="GO" id="GO:0005829">
    <property type="term" value="C:cytosol"/>
    <property type="evidence" value="ECO:0000314"/>
    <property type="project" value="HPA"/>
</dbReference>
<dbReference type="GO" id="GO:0005730">
    <property type="term" value="C:nucleolus"/>
    <property type="evidence" value="ECO:0000314"/>
    <property type="project" value="HPA"/>
</dbReference>
<dbReference type="GO" id="GO:0005654">
    <property type="term" value="C:nucleoplasm"/>
    <property type="evidence" value="ECO:0000314"/>
    <property type="project" value="HPA"/>
</dbReference>
<dbReference type="GO" id="GO:0005634">
    <property type="term" value="C:nucleus"/>
    <property type="evidence" value="ECO:0000250"/>
    <property type="project" value="UniProtKB"/>
</dbReference>
<dbReference type="GO" id="GO:1990830">
    <property type="term" value="P:cellular response to leukemia inhibitory factor"/>
    <property type="evidence" value="ECO:0007669"/>
    <property type="project" value="Ensembl"/>
</dbReference>
<dbReference type="GO" id="GO:0008285">
    <property type="term" value="P:negative regulation of cell population proliferation"/>
    <property type="evidence" value="ECO:0000250"/>
    <property type="project" value="UniProtKB"/>
</dbReference>
<dbReference type="GO" id="GO:0043065">
    <property type="term" value="P:positive regulation of apoptotic process"/>
    <property type="evidence" value="ECO:0000250"/>
    <property type="project" value="UniProtKB"/>
</dbReference>
<dbReference type="GO" id="GO:2001235">
    <property type="term" value="P:positive regulation of apoptotic signaling pathway"/>
    <property type="evidence" value="ECO:0007669"/>
    <property type="project" value="Ensembl"/>
</dbReference>
<dbReference type="GO" id="GO:2000774">
    <property type="term" value="P:positive regulation of cellular senescence"/>
    <property type="evidence" value="ECO:0000314"/>
    <property type="project" value="BHF-UCL"/>
</dbReference>
<dbReference type="GO" id="GO:0043517">
    <property type="term" value="P:positive regulation of DNA damage response, signal transduction by p53 class mediator"/>
    <property type="evidence" value="ECO:0000250"/>
    <property type="project" value="UniProtKB"/>
</dbReference>
<dbReference type="GO" id="GO:0006412">
    <property type="term" value="P:translation"/>
    <property type="evidence" value="ECO:0007669"/>
    <property type="project" value="UniProtKB-KW"/>
</dbReference>
<dbReference type="CDD" id="cd10305">
    <property type="entry name" value="GST_C_AIMP3"/>
    <property type="match status" value="1"/>
</dbReference>
<dbReference type="FunFam" id="1.20.1050.10:FF:000032">
    <property type="entry name" value="Eukaryotic translation elongation factor 1 epsilon-1"/>
    <property type="match status" value="1"/>
</dbReference>
<dbReference type="FunFam" id="3.40.30.90:FF:000001">
    <property type="entry name" value="Eukaryotic translation elongation factor 1 epsilon-1"/>
    <property type="match status" value="1"/>
</dbReference>
<dbReference type="Gene3D" id="1.20.1050.10">
    <property type="match status" value="1"/>
</dbReference>
<dbReference type="Gene3D" id="3.40.30.90">
    <property type="match status" value="1"/>
</dbReference>
<dbReference type="InterPro" id="IPR053837">
    <property type="entry name" value="AIMP3/p18_C"/>
</dbReference>
<dbReference type="InterPro" id="IPR053836">
    <property type="entry name" value="Arc1-like_N"/>
</dbReference>
<dbReference type="InterPro" id="IPR042450">
    <property type="entry name" value="EEF1E1"/>
</dbReference>
<dbReference type="InterPro" id="IPR010987">
    <property type="entry name" value="Glutathione-S-Trfase_C-like"/>
</dbReference>
<dbReference type="InterPro" id="IPR036282">
    <property type="entry name" value="Glutathione-S-Trfase_C_sf"/>
</dbReference>
<dbReference type="PANTHER" id="PTHR44490">
    <property type="entry name" value="EUKARYOTIC TRANSLATION ELONGATION FACTOR 1 EPSILON-1"/>
    <property type="match status" value="1"/>
</dbReference>
<dbReference type="PANTHER" id="PTHR44490:SF1">
    <property type="entry name" value="EUKARYOTIC TRANSLATION ELONGATION FACTOR 1 EPSILON-1"/>
    <property type="match status" value="1"/>
</dbReference>
<dbReference type="Pfam" id="PF21972">
    <property type="entry name" value="Arc1p_N_like"/>
    <property type="match status" value="1"/>
</dbReference>
<dbReference type="SUPFAM" id="SSF47616">
    <property type="entry name" value="GST C-terminal domain-like"/>
    <property type="match status" value="1"/>
</dbReference>
<dbReference type="PROSITE" id="PS50405">
    <property type="entry name" value="GST_CTER"/>
    <property type="match status" value="1"/>
</dbReference>